<dbReference type="EMBL" id="AP009351">
    <property type="protein sequence ID" value="BAF67477.1"/>
    <property type="molecule type" value="Genomic_DNA"/>
</dbReference>
<dbReference type="RefSeq" id="WP_000516261.1">
    <property type="nucleotide sequence ID" value="NZ_JBBIAE010000001.1"/>
</dbReference>
<dbReference type="SMR" id="A6QGJ5"/>
<dbReference type="KEGG" id="sae:NWMN_1205"/>
<dbReference type="HOGENOM" id="CLU_004131_4_1_9"/>
<dbReference type="Proteomes" id="UP000006386">
    <property type="component" value="Chromosome"/>
</dbReference>
<dbReference type="GO" id="GO:0032300">
    <property type="term" value="C:mismatch repair complex"/>
    <property type="evidence" value="ECO:0007669"/>
    <property type="project" value="InterPro"/>
</dbReference>
<dbReference type="GO" id="GO:0005524">
    <property type="term" value="F:ATP binding"/>
    <property type="evidence" value="ECO:0007669"/>
    <property type="project" value="InterPro"/>
</dbReference>
<dbReference type="GO" id="GO:0016887">
    <property type="term" value="F:ATP hydrolysis activity"/>
    <property type="evidence" value="ECO:0007669"/>
    <property type="project" value="InterPro"/>
</dbReference>
<dbReference type="GO" id="GO:0140664">
    <property type="term" value="F:ATP-dependent DNA damage sensor activity"/>
    <property type="evidence" value="ECO:0007669"/>
    <property type="project" value="InterPro"/>
</dbReference>
<dbReference type="GO" id="GO:0030983">
    <property type="term" value="F:mismatched DNA binding"/>
    <property type="evidence" value="ECO:0007669"/>
    <property type="project" value="InterPro"/>
</dbReference>
<dbReference type="GO" id="GO:0006298">
    <property type="term" value="P:mismatch repair"/>
    <property type="evidence" value="ECO:0007669"/>
    <property type="project" value="UniProtKB-UniRule"/>
</dbReference>
<dbReference type="CDD" id="cd16926">
    <property type="entry name" value="HATPase_MutL-MLH-PMS-like"/>
    <property type="match status" value="1"/>
</dbReference>
<dbReference type="CDD" id="cd00782">
    <property type="entry name" value="MutL_Trans"/>
    <property type="match status" value="1"/>
</dbReference>
<dbReference type="FunFam" id="3.30.1370.100:FF:000004">
    <property type="entry name" value="DNA mismatch repair endonuclease MutL"/>
    <property type="match status" value="1"/>
</dbReference>
<dbReference type="FunFam" id="3.30.230.10:FF:000036">
    <property type="entry name" value="DNA mismatch repair endonuclease MutL"/>
    <property type="match status" value="1"/>
</dbReference>
<dbReference type="FunFam" id="3.30.565.10:FF:000003">
    <property type="entry name" value="DNA mismatch repair endonuclease MutL"/>
    <property type="match status" value="1"/>
</dbReference>
<dbReference type="Gene3D" id="3.30.230.10">
    <property type="match status" value="1"/>
</dbReference>
<dbReference type="Gene3D" id="3.30.565.10">
    <property type="entry name" value="Histidine kinase-like ATPase, C-terminal domain"/>
    <property type="match status" value="1"/>
</dbReference>
<dbReference type="Gene3D" id="3.30.1540.20">
    <property type="entry name" value="MutL, C-terminal domain, dimerisation subdomain"/>
    <property type="match status" value="1"/>
</dbReference>
<dbReference type="Gene3D" id="3.30.1370.100">
    <property type="entry name" value="MutL, C-terminal domain, regulatory subdomain"/>
    <property type="match status" value="1"/>
</dbReference>
<dbReference type="HAMAP" id="MF_00149">
    <property type="entry name" value="DNA_mis_repair"/>
    <property type="match status" value="1"/>
</dbReference>
<dbReference type="InterPro" id="IPR014762">
    <property type="entry name" value="DNA_mismatch_repair_CS"/>
</dbReference>
<dbReference type="InterPro" id="IPR020667">
    <property type="entry name" value="DNA_mismatch_repair_MutL"/>
</dbReference>
<dbReference type="InterPro" id="IPR013507">
    <property type="entry name" value="DNA_mismatch_S5_2-like"/>
</dbReference>
<dbReference type="InterPro" id="IPR036890">
    <property type="entry name" value="HATPase_C_sf"/>
</dbReference>
<dbReference type="InterPro" id="IPR002099">
    <property type="entry name" value="MutL/Mlh/PMS"/>
</dbReference>
<dbReference type="InterPro" id="IPR038973">
    <property type="entry name" value="MutL/Mlh/Pms-like"/>
</dbReference>
<dbReference type="InterPro" id="IPR014790">
    <property type="entry name" value="MutL_C"/>
</dbReference>
<dbReference type="InterPro" id="IPR042120">
    <property type="entry name" value="MutL_C_dimsub"/>
</dbReference>
<dbReference type="InterPro" id="IPR042121">
    <property type="entry name" value="MutL_C_regsub"/>
</dbReference>
<dbReference type="InterPro" id="IPR037198">
    <property type="entry name" value="MutL_C_sf"/>
</dbReference>
<dbReference type="InterPro" id="IPR020568">
    <property type="entry name" value="Ribosomal_Su5_D2-typ_SF"/>
</dbReference>
<dbReference type="InterPro" id="IPR014721">
    <property type="entry name" value="Ribsml_uS5_D2-typ_fold_subgr"/>
</dbReference>
<dbReference type="NCBIfam" id="TIGR00585">
    <property type="entry name" value="mutl"/>
    <property type="match status" value="1"/>
</dbReference>
<dbReference type="NCBIfam" id="NF000950">
    <property type="entry name" value="PRK00095.1-3"/>
    <property type="match status" value="1"/>
</dbReference>
<dbReference type="PANTHER" id="PTHR10073">
    <property type="entry name" value="DNA MISMATCH REPAIR PROTEIN MLH, PMS, MUTL"/>
    <property type="match status" value="1"/>
</dbReference>
<dbReference type="PANTHER" id="PTHR10073:SF12">
    <property type="entry name" value="DNA MISMATCH REPAIR PROTEIN MLH1"/>
    <property type="match status" value="1"/>
</dbReference>
<dbReference type="Pfam" id="PF01119">
    <property type="entry name" value="DNA_mis_repair"/>
    <property type="match status" value="1"/>
</dbReference>
<dbReference type="Pfam" id="PF13589">
    <property type="entry name" value="HATPase_c_3"/>
    <property type="match status" value="1"/>
</dbReference>
<dbReference type="Pfam" id="PF08676">
    <property type="entry name" value="MutL_C"/>
    <property type="match status" value="1"/>
</dbReference>
<dbReference type="SMART" id="SM01340">
    <property type="entry name" value="DNA_mis_repair"/>
    <property type="match status" value="1"/>
</dbReference>
<dbReference type="SMART" id="SM00853">
    <property type="entry name" value="MutL_C"/>
    <property type="match status" value="1"/>
</dbReference>
<dbReference type="SUPFAM" id="SSF55874">
    <property type="entry name" value="ATPase domain of HSP90 chaperone/DNA topoisomerase II/histidine kinase"/>
    <property type="match status" value="1"/>
</dbReference>
<dbReference type="SUPFAM" id="SSF118116">
    <property type="entry name" value="DNA mismatch repair protein MutL"/>
    <property type="match status" value="1"/>
</dbReference>
<dbReference type="SUPFAM" id="SSF54211">
    <property type="entry name" value="Ribosomal protein S5 domain 2-like"/>
    <property type="match status" value="1"/>
</dbReference>
<dbReference type="PROSITE" id="PS00058">
    <property type="entry name" value="DNA_MISMATCH_REPAIR_1"/>
    <property type="match status" value="1"/>
</dbReference>
<comment type="function">
    <text evidence="1">This protein is involved in the repair of mismatches in DNA. It is required for dam-dependent methyl-directed DNA mismatch repair. May act as a 'molecular matchmaker', a protein that promotes the formation of a stable complex between two or more DNA-binding proteins in an ATP-dependent manner without itself being part of a final effector complex.</text>
</comment>
<comment type="similarity">
    <text evidence="1">Belongs to the DNA mismatch repair MutL/HexB family.</text>
</comment>
<keyword id="KW-0227">DNA damage</keyword>
<keyword id="KW-0234">DNA repair</keyword>
<feature type="chain" id="PRO_1000071510" description="DNA mismatch repair protein MutL">
    <location>
        <begin position="1"/>
        <end position="669"/>
    </location>
</feature>
<feature type="region of interest" description="Disordered" evidence="2">
    <location>
        <begin position="356"/>
        <end position="382"/>
    </location>
</feature>
<feature type="compositionally biased region" description="Polar residues" evidence="2">
    <location>
        <begin position="361"/>
        <end position="378"/>
    </location>
</feature>
<reference key="1">
    <citation type="journal article" date="2008" name="J. Bacteriol.">
        <title>Genome sequence of Staphylococcus aureus strain Newman and comparative analysis of staphylococcal genomes: polymorphism and evolution of two major pathogenicity islands.</title>
        <authorList>
            <person name="Baba T."/>
            <person name="Bae T."/>
            <person name="Schneewind O."/>
            <person name="Takeuchi F."/>
            <person name="Hiramatsu K."/>
        </authorList>
    </citation>
    <scope>NUCLEOTIDE SEQUENCE [LARGE SCALE GENOMIC DNA]</scope>
    <source>
        <strain>Newman</strain>
    </source>
</reference>
<proteinExistence type="inferred from homology"/>
<gene>
    <name evidence="1" type="primary">mutL</name>
    <name type="ordered locus">NWMN_1205</name>
</gene>
<accession>A6QGJ5</accession>
<name>MUTL_STAAE</name>
<evidence type="ECO:0000255" key="1">
    <source>
        <dbReference type="HAMAP-Rule" id="MF_00149"/>
    </source>
</evidence>
<evidence type="ECO:0000256" key="2">
    <source>
        <dbReference type="SAM" id="MobiDB-lite"/>
    </source>
</evidence>
<sequence length="669" mass="76855">MGKIKELQTSLANKIAAGEVVERPSSVVKELLENAIDAGATEISIEVEESGVQSIRVVDNGSGIEAEDLGLVFHRHATSKLDQDEDLFHIRTLGFRGEALASISSVAKVTLKTCTDNANGNEIYVENGEILNHKPAKAKKGTDILVESLFYNTPARLKYIKSLYTELGKITDIVNRMAMSHPDIRIALISDGKTMLSTNGSGRTNEVMAEIYGMKVARDLVHISGDTSDYHIEGFVAKPEHSRSNKHYISIFINGRYIKNFMLNKAILEGYHTLLTIGRFPICYINIEMDPILVDVNVHPTKLEVRLSKEEQLYQLIVSKIQEAFKDRILIPKNNLDYVPKKNKVLHSFEQQKIEFEQRQNTENNQEKTFSSEESNSKPFMEENQNDEIVIKEDSYNPFVTKTSESLIADDESSGYNNTREKDEDYFKKQQEILQEMDQTFDSNDGTTVQNYENKASDDYYDVNDIKGTKSKDPKRRIPYMEIVGQVHGTYIIAQNEFGMYMIDQHAAQERIKYEYFRDKIGEVTNEVQDLLIPLTFHFSKDEQLVIDQYKNELQQVGIMLEHFGGHDYIVSSYPVWFPKDEVEEIIKDMIELILEEKKVDIKKLREDVAIMMSCKKSIKANHYLQKHEMSDLIDQLREAEDPFTCPHGRPIIINFSKYELEKLFKRVM</sequence>
<organism>
    <name type="scientific">Staphylococcus aureus (strain Newman)</name>
    <dbReference type="NCBI Taxonomy" id="426430"/>
    <lineage>
        <taxon>Bacteria</taxon>
        <taxon>Bacillati</taxon>
        <taxon>Bacillota</taxon>
        <taxon>Bacilli</taxon>
        <taxon>Bacillales</taxon>
        <taxon>Staphylococcaceae</taxon>
        <taxon>Staphylococcus</taxon>
    </lineage>
</organism>
<protein>
    <recommendedName>
        <fullName evidence="1">DNA mismatch repair protein MutL</fullName>
    </recommendedName>
</protein>